<gene>
    <name type="primary">RVB2</name>
    <name type="ordered locus">DEHA2D10054g</name>
</gene>
<organism>
    <name type="scientific">Debaryomyces hansenii (strain ATCC 36239 / CBS 767 / BCRC 21394 / JCM 1990 / NBRC 0083 / IGC 2968)</name>
    <name type="common">Yeast</name>
    <name type="synonym">Torulaspora hansenii</name>
    <dbReference type="NCBI Taxonomy" id="284592"/>
    <lineage>
        <taxon>Eukaryota</taxon>
        <taxon>Fungi</taxon>
        <taxon>Dikarya</taxon>
        <taxon>Ascomycota</taxon>
        <taxon>Saccharomycotina</taxon>
        <taxon>Pichiomycetes</taxon>
        <taxon>Debaryomycetaceae</taxon>
        <taxon>Debaryomyces</taxon>
    </lineage>
</organism>
<name>RUVB2_DEBHA</name>
<comment type="function">
    <text evidence="1">DNA helicase which participates in several chromatin remodeling complexes, including the SWR1 and the INO80 complexes. The SWR1 complex mediates the ATP-dependent exchange of histone H2A for the H2A variant HZT1 leading to transcriptional regulation of selected genes by chromatin remodeling. The INO80 complex remodels chromatin by shifting nucleosomes and is involved in DNA repair. Also involved in pre-rRNA processing (By similarity).</text>
</comment>
<comment type="catalytic activity">
    <reaction>
        <text>ATP + H2O = ADP + phosphate + H(+)</text>
        <dbReference type="Rhea" id="RHEA:13065"/>
        <dbReference type="ChEBI" id="CHEBI:15377"/>
        <dbReference type="ChEBI" id="CHEBI:15378"/>
        <dbReference type="ChEBI" id="CHEBI:30616"/>
        <dbReference type="ChEBI" id="CHEBI:43474"/>
        <dbReference type="ChEBI" id="CHEBI:456216"/>
        <dbReference type="EC" id="3.6.4.12"/>
    </reaction>
</comment>
<comment type="subunit">
    <text evidence="1">May form heterododecamers with RVB1. Component of the SWR1 chromatin remodeling complex, the INO80 chromatin remodeling complex, and of the R2TP complex (By similarity).</text>
</comment>
<comment type="subcellular location">
    <subcellularLocation>
        <location evidence="1">Nucleus</location>
    </subcellularLocation>
</comment>
<comment type="similarity">
    <text evidence="2">Belongs to the RuvB family.</text>
</comment>
<dbReference type="EC" id="3.6.4.12"/>
<dbReference type="EMBL" id="CR382136">
    <property type="protein sequence ID" value="CAG87056.1"/>
    <property type="molecule type" value="Genomic_DNA"/>
</dbReference>
<dbReference type="RefSeq" id="XP_458902.1">
    <property type="nucleotide sequence ID" value="XM_458902.1"/>
</dbReference>
<dbReference type="SMR" id="Q6BSB8"/>
<dbReference type="FunCoup" id="Q6BSB8">
    <property type="interactions" value="1643"/>
</dbReference>
<dbReference type="STRING" id="284592.Q6BSB8"/>
<dbReference type="GeneID" id="2901300"/>
<dbReference type="KEGG" id="dha:DEHA2D10054g"/>
<dbReference type="VEuPathDB" id="FungiDB:DEHA2D10054g"/>
<dbReference type="eggNOG" id="KOG2680">
    <property type="taxonomic scope" value="Eukaryota"/>
</dbReference>
<dbReference type="HOGENOM" id="CLU_028311_4_0_1"/>
<dbReference type="InParanoid" id="Q6BSB8"/>
<dbReference type="OMA" id="IINTEPY"/>
<dbReference type="OrthoDB" id="10060499at2759"/>
<dbReference type="Proteomes" id="UP000000599">
    <property type="component" value="Chromosome D"/>
</dbReference>
<dbReference type="GO" id="GO:0031011">
    <property type="term" value="C:Ino80 complex"/>
    <property type="evidence" value="ECO:0007669"/>
    <property type="project" value="EnsemblFungi"/>
</dbReference>
<dbReference type="GO" id="GO:0097255">
    <property type="term" value="C:R2TP complex"/>
    <property type="evidence" value="ECO:0007669"/>
    <property type="project" value="EnsemblFungi"/>
</dbReference>
<dbReference type="GO" id="GO:0000812">
    <property type="term" value="C:Swr1 complex"/>
    <property type="evidence" value="ECO:0007669"/>
    <property type="project" value="EnsemblFungi"/>
</dbReference>
<dbReference type="GO" id="GO:0043138">
    <property type="term" value="F:3'-5' DNA helicase activity"/>
    <property type="evidence" value="ECO:0007669"/>
    <property type="project" value="EnsemblFungi"/>
</dbReference>
<dbReference type="GO" id="GO:0043139">
    <property type="term" value="F:5'-3' DNA helicase activity"/>
    <property type="evidence" value="ECO:0007669"/>
    <property type="project" value="EnsemblFungi"/>
</dbReference>
<dbReference type="GO" id="GO:0005524">
    <property type="term" value="F:ATP binding"/>
    <property type="evidence" value="ECO:0007669"/>
    <property type="project" value="UniProtKB-KW"/>
</dbReference>
<dbReference type="GO" id="GO:0016887">
    <property type="term" value="F:ATP hydrolysis activity"/>
    <property type="evidence" value="ECO:0007669"/>
    <property type="project" value="InterPro"/>
</dbReference>
<dbReference type="GO" id="GO:0000492">
    <property type="term" value="P:box C/D snoRNP assembly"/>
    <property type="evidence" value="ECO:0007669"/>
    <property type="project" value="EnsemblFungi"/>
</dbReference>
<dbReference type="GO" id="GO:0006338">
    <property type="term" value="P:chromatin remodeling"/>
    <property type="evidence" value="ECO:0007669"/>
    <property type="project" value="EnsemblFungi"/>
</dbReference>
<dbReference type="GO" id="GO:0006281">
    <property type="term" value="P:DNA repair"/>
    <property type="evidence" value="ECO:0007669"/>
    <property type="project" value="UniProtKB-KW"/>
</dbReference>
<dbReference type="GO" id="GO:0006357">
    <property type="term" value="P:regulation of transcription by RNA polymerase II"/>
    <property type="evidence" value="ECO:0007669"/>
    <property type="project" value="EnsemblFungi"/>
</dbReference>
<dbReference type="GO" id="GO:0006364">
    <property type="term" value="P:rRNA processing"/>
    <property type="evidence" value="ECO:0007669"/>
    <property type="project" value="UniProtKB-KW"/>
</dbReference>
<dbReference type="FunFam" id="3.40.50.300:FF:002221">
    <property type="entry name" value="RuvB-like 2"/>
    <property type="match status" value="2"/>
</dbReference>
<dbReference type="FunFam" id="1.10.8.60:FF:000010">
    <property type="entry name" value="RuvB-like helicase"/>
    <property type="match status" value="1"/>
</dbReference>
<dbReference type="FunFam" id="2.40.50.360:FF:000002">
    <property type="entry name" value="RuvB-like helicase"/>
    <property type="match status" value="1"/>
</dbReference>
<dbReference type="Gene3D" id="1.10.8.60">
    <property type="match status" value="1"/>
</dbReference>
<dbReference type="Gene3D" id="3.40.50.300">
    <property type="entry name" value="P-loop containing nucleotide triphosphate hydrolases"/>
    <property type="match status" value="1"/>
</dbReference>
<dbReference type="Gene3D" id="2.40.50.360">
    <property type="entry name" value="RuvB-like helicase, domain II"/>
    <property type="match status" value="1"/>
</dbReference>
<dbReference type="InterPro" id="IPR003593">
    <property type="entry name" value="AAA+_ATPase"/>
</dbReference>
<dbReference type="InterPro" id="IPR027417">
    <property type="entry name" value="P-loop_NTPase"/>
</dbReference>
<dbReference type="InterPro" id="IPR027238">
    <property type="entry name" value="RuvB-like"/>
</dbReference>
<dbReference type="InterPro" id="IPR041048">
    <property type="entry name" value="RuvB-like_C"/>
</dbReference>
<dbReference type="InterPro" id="IPR042487">
    <property type="entry name" value="RuvBL1/2_DNA/RNA_bd_dom"/>
</dbReference>
<dbReference type="InterPro" id="IPR010339">
    <property type="entry name" value="TIP49_P-loop"/>
</dbReference>
<dbReference type="PANTHER" id="PTHR11093">
    <property type="entry name" value="RUVB-RELATED REPTIN AND PONTIN"/>
    <property type="match status" value="1"/>
</dbReference>
<dbReference type="Pfam" id="PF06068">
    <property type="entry name" value="TIP49"/>
    <property type="match status" value="1"/>
</dbReference>
<dbReference type="Pfam" id="PF17856">
    <property type="entry name" value="TIP49_C"/>
    <property type="match status" value="1"/>
</dbReference>
<dbReference type="SMART" id="SM00382">
    <property type="entry name" value="AAA"/>
    <property type="match status" value="1"/>
</dbReference>
<dbReference type="SUPFAM" id="SSF52540">
    <property type="entry name" value="P-loop containing nucleoside triphosphate hydrolases"/>
    <property type="match status" value="1"/>
</dbReference>
<protein>
    <recommendedName>
        <fullName>RuvB-like helicase 2</fullName>
        <ecNumber>3.6.4.12</ecNumber>
    </recommendedName>
</protein>
<proteinExistence type="inferred from homology"/>
<evidence type="ECO:0000250" key="1"/>
<evidence type="ECO:0000305" key="2"/>
<accession>Q6BSB8</accession>
<sequence>MSANTISTKVQSKDLNGLSLIAAHSHISGLGLDDNLQPKESGQGMVGQLKARKAAGVILKMIQAGKIAGRAVLVAGPPSTGKTAIAMGLSQNLGSEVPFTAIAGSEIFSLELSKTESLTQAFRKSIGIKIKEETEMIEGEVVEIQIDRSITGGHKQGKLTIKTTDMETIYELGNKMIEGLTKEKVLAGDVISIDKASGKITKLGKSFTRARDYDAMGPETKFVQCPEGELQKRKEVVHTVSLHEIDVINSRQQGFLALFSGDTGEIRSEVRDQINTKVAEWKEEGKAEIVPGVLFIDEVHMLDIECFSFINRALEDDFAPIVIMATNRGISKTRGTNYKSPHGLPMDLLDRSIIIHTAPYNADEIRTILLIRATEEEVELTGDALALLTKIGQETSLRYASNLISVSQQIALKRRSNSVDLPDIKRSYMLFLDSDRSVQYLEEFSTQFIDDSGNVTFGTNDASVKQTKGAANGEDKMETD</sequence>
<feature type="chain" id="PRO_0000165667" description="RuvB-like helicase 2">
    <location>
        <begin position="1"/>
        <end position="480"/>
    </location>
</feature>
<feature type="binding site" evidence="1">
    <location>
        <begin position="76"/>
        <end position="83"/>
    </location>
    <ligand>
        <name>ATP</name>
        <dbReference type="ChEBI" id="CHEBI:30616"/>
    </ligand>
</feature>
<keyword id="KW-0010">Activator</keyword>
<keyword id="KW-0067">ATP-binding</keyword>
<keyword id="KW-0156">Chromatin regulator</keyword>
<keyword id="KW-0227">DNA damage</keyword>
<keyword id="KW-0234">DNA repair</keyword>
<keyword id="KW-0347">Helicase</keyword>
<keyword id="KW-0378">Hydrolase</keyword>
<keyword id="KW-0547">Nucleotide-binding</keyword>
<keyword id="KW-0539">Nucleus</keyword>
<keyword id="KW-1185">Reference proteome</keyword>
<keyword id="KW-0698">rRNA processing</keyword>
<keyword id="KW-0804">Transcription</keyword>
<keyword id="KW-0805">Transcription regulation</keyword>
<reference key="1">
    <citation type="journal article" date="2004" name="Nature">
        <title>Genome evolution in yeasts.</title>
        <authorList>
            <person name="Dujon B."/>
            <person name="Sherman D."/>
            <person name="Fischer G."/>
            <person name="Durrens P."/>
            <person name="Casaregola S."/>
            <person name="Lafontaine I."/>
            <person name="de Montigny J."/>
            <person name="Marck C."/>
            <person name="Neuveglise C."/>
            <person name="Talla E."/>
            <person name="Goffard N."/>
            <person name="Frangeul L."/>
            <person name="Aigle M."/>
            <person name="Anthouard V."/>
            <person name="Babour A."/>
            <person name="Barbe V."/>
            <person name="Barnay S."/>
            <person name="Blanchin S."/>
            <person name="Beckerich J.-M."/>
            <person name="Beyne E."/>
            <person name="Bleykasten C."/>
            <person name="Boisrame A."/>
            <person name="Boyer J."/>
            <person name="Cattolico L."/>
            <person name="Confanioleri F."/>
            <person name="de Daruvar A."/>
            <person name="Despons L."/>
            <person name="Fabre E."/>
            <person name="Fairhead C."/>
            <person name="Ferry-Dumazet H."/>
            <person name="Groppi A."/>
            <person name="Hantraye F."/>
            <person name="Hennequin C."/>
            <person name="Jauniaux N."/>
            <person name="Joyet P."/>
            <person name="Kachouri R."/>
            <person name="Kerrest A."/>
            <person name="Koszul R."/>
            <person name="Lemaire M."/>
            <person name="Lesur I."/>
            <person name="Ma L."/>
            <person name="Muller H."/>
            <person name="Nicaud J.-M."/>
            <person name="Nikolski M."/>
            <person name="Oztas S."/>
            <person name="Ozier-Kalogeropoulos O."/>
            <person name="Pellenz S."/>
            <person name="Potier S."/>
            <person name="Richard G.-F."/>
            <person name="Straub M.-L."/>
            <person name="Suleau A."/>
            <person name="Swennen D."/>
            <person name="Tekaia F."/>
            <person name="Wesolowski-Louvel M."/>
            <person name="Westhof E."/>
            <person name="Wirth B."/>
            <person name="Zeniou-Meyer M."/>
            <person name="Zivanovic Y."/>
            <person name="Bolotin-Fukuhara M."/>
            <person name="Thierry A."/>
            <person name="Bouchier C."/>
            <person name="Caudron B."/>
            <person name="Scarpelli C."/>
            <person name="Gaillardin C."/>
            <person name="Weissenbach J."/>
            <person name="Wincker P."/>
            <person name="Souciet J.-L."/>
        </authorList>
    </citation>
    <scope>NUCLEOTIDE SEQUENCE [LARGE SCALE GENOMIC DNA]</scope>
    <source>
        <strain>ATCC 36239 / CBS 767 / BCRC 21394 / JCM 1990 / NBRC 0083 / IGC 2968</strain>
    </source>
</reference>